<name>GATA_BRUO2</name>
<sequence length="493" mass="52419">MSELTALTIAEARDKLKAKAITATELTDAYLSAIDAANDAINAYVAVTHDQARSMAKASDERIAKGEAGALEGIPLGVKDLFATKGVHTQACSHILDGFKPEYESTVTANLWADGAVMLGKLNMDEFAMGSSNETSYYGPVKNPWRAKGSNADLVPGGSSGGSAAAVAAHLCAGATATDTGGSIRQPAAFTGTVGIKPTYGRVSRWGTVAFASSLDQAGPIARDVRDAAILMKSMASLDLKDTTSVDLPVPDYEAALGRSVKGMKIGIPREYRVDGMPGEIEELWQKGIQYLKDAGAEIVDISLPHTKYALPAYYIVAPAEASSNLARYDGVRYGLRVPGKDIADMYEQTRAAGFGKEAKRRIMIGTYVLSAGYYDAYYLRAQKVRTLIKKDFEDVFAKGVDAILTPATPSAAFGLADEVLANDPVKMYLNDIFTVTVNMAGLPGIAVPAGLNGQGLPLGLQLIGRPFEEETLFQAAHVIEQAAGRFTPAKWW</sequence>
<accession>A5VUS6</accession>
<gene>
    <name evidence="1" type="primary">gatA</name>
    <name type="ordered locus">BOV_A0559</name>
</gene>
<proteinExistence type="inferred from homology"/>
<feature type="chain" id="PRO_1000015804" description="Glutamyl-tRNA(Gln) amidotransferase subunit A">
    <location>
        <begin position="1"/>
        <end position="493"/>
    </location>
</feature>
<feature type="active site" description="Charge relay system" evidence="1">
    <location>
        <position position="79"/>
    </location>
</feature>
<feature type="active site" description="Charge relay system" evidence="1">
    <location>
        <position position="159"/>
    </location>
</feature>
<feature type="active site" description="Acyl-ester intermediate" evidence="1">
    <location>
        <position position="183"/>
    </location>
</feature>
<organism>
    <name type="scientific">Brucella ovis (strain ATCC 25840 / 63/290 / NCTC 10512)</name>
    <dbReference type="NCBI Taxonomy" id="444178"/>
    <lineage>
        <taxon>Bacteria</taxon>
        <taxon>Pseudomonadati</taxon>
        <taxon>Pseudomonadota</taxon>
        <taxon>Alphaproteobacteria</taxon>
        <taxon>Hyphomicrobiales</taxon>
        <taxon>Brucellaceae</taxon>
        <taxon>Brucella/Ochrobactrum group</taxon>
        <taxon>Brucella</taxon>
    </lineage>
</organism>
<dbReference type="EC" id="6.3.5.7" evidence="1"/>
<dbReference type="EMBL" id="CP000709">
    <property type="protein sequence ID" value="ABQ62345.1"/>
    <property type="molecule type" value="Genomic_DNA"/>
</dbReference>
<dbReference type="RefSeq" id="WP_006016118.1">
    <property type="nucleotide sequence ID" value="NC_009504.1"/>
</dbReference>
<dbReference type="SMR" id="A5VUS6"/>
<dbReference type="GeneID" id="45125944"/>
<dbReference type="KEGG" id="bov:BOV_A0559"/>
<dbReference type="HOGENOM" id="CLU_009600_0_3_5"/>
<dbReference type="Proteomes" id="UP000006383">
    <property type="component" value="Chromosome II"/>
</dbReference>
<dbReference type="GO" id="GO:0030956">
    <property type="term" value="C:glutamyl-tRNA(Gln) amidotransferase complex"/>
    <property type="evidence" value="ECO:0007669"/>
    <property type="project" value="InterPro"/>
</dbReference>
<dbReference type="GO" id="GO:0005524">
    <property type="term" value="F:ATP binding"/>
    <property type="evidence" value="ECO:0007669"/>
    <property type="project" value="UniProtKB-KW"/>
</dbReference>
<dbReference type="GO" id="GO:0050567">
    <property type="term" value="F:glutaminyl-tRNA synthase (glutamine-hydrolyzing) activity"/>
    <property type="evidence" value="ECO:0007669"/>
    <property type="project" value="UniProtKB-UniRule"/>
</dbReference>
<dbReference type="GO" id="GO:0006412">
    <property type="term" value="P:translation"/>
    <property type="evidence" value="ECO:0007669"/>
    <property type="project" value="UniProtKB-UniRule"/>
</dbReference>
<dbReference type="Gene3D" id="3.90.1300.10">
    <property type="entry name" value="Amidase signature (AS) domain"/>
    <property type="match status" value="1"/>
</dbReference>
<dbReference type="HAMAP" id="MF_00120">
    <property type="entry name" value="GatA"/>
    <property type="match status" value="1"/>
</dbReference>
<dbReference type="InterPro" id="IPR000120">
    <property type="entry name" value="Amidase"/>
</dbReference>
<dbReference type="InterPro" id="IPR020556">
    <property type="entry name" value="Amidase_CS"/>
</dbReference>
<dbReference type="InterPro" id="IPR023631">
    <property type="entry name" value="Amidase_dom"/>
</dbReference>
<dbReference type="InterPro" id="IPR036928">
    <property type="entry name" value="AS_sf"/>
</dbReference>
<dbReference type="InterPro" id="IPR004412">
    <property type="entry name" value="GatA"/>
</dbReference>
<dbReference type="NCBIfam" id="TIGR00132">
    <property type="entry name" value="gatA"/>
    <property type="match status" value="1"/>
</dbReference>
<dbReference type="PANTHER" id="PTHR11895:SF151">
    <property type="entry name" value="GLUTAMYL-TRNA(GLN) AMIDOTRANSFERASE SUBUNIT A"/>
    <property type="match status" value="1"/>
</dbReference>
<dbReference type="PANTHER" id="PTHR11895">
    <property type="entry name" value="TRANSAMIDASE"/>
    <property type="match status" value="1"/>
</dbReference>
<dbReference type="Pfam" id="PF01425">
    <property type="entry name" value="Amidase"/>
    <property type="match status" value="1"/>
</dbReference>
<dbReference type="SUPFAM" id="SSF75304">
    <property type="entry name" value="Amidase signature (AS) enzymes"/>
    <property type="match status" value="1"/>
</dbReference>
<dbReference type="PROSITE" id="PS00571">
    <property type="entry name" value="AMIDASES"/>
    <property type="match status" value="1"/>
</dbReference>
<evidence type="ECO:0000255" key="1">
    <source>
        <dbReference type="HAMAP-Rule" id="MF_00120"/>
    </source>
</evidence>
<keyword id="KW-0067">ATP-binding</keyword>
<keyword id="KW-0436">Ligase</keyword>
<keyword id="KW-0547">Nucleotide-binding</keyword>
<keyword id="KW-0648">Protein biosynthesis</keyword>
<comment type="function">
    <text evidence="1">Allows the formation of correctly charged Gln-tRNA(Gln) through the transamidation of misacylated Glu-tRNA(Gln) in organisms which lack glutaminyl-tRNA synthetase. The reaction takes place in the presence of glutamine and ATP through an activated gamma-phospho-Glu-tRNA(Gln).</text>
</comment>
<comment type="catalytic activity">
    <reaction evidence="1">
        <text>L-glutamyl-tRNA(Gln) + L-glutamine + ATP + H2O = L-glutaminyl-tRNA(Gln) + L-glutamate + ADP + phosphate + H(+)</text>
        <dbReference type="Rhea" id="RHEA:17521"/>
        <dbReference type="Rhea" id="RHEA-COMP:9681"/>
        <dbReference type="Rhea" id="RHEA-COMP:9684"/>
        <dbReference type="ChEBI" id="CHEBI:15377"/>
        <dbReference type="ChEBI" id="CHEBI:15378"/>
        <dbReference type="ChEBI" id="CHEBI:29985"/>
        <dbReference type="ChEBI" id="CHEBI:30616"/>
        <dbReference type="ChEBI" id="CHEBI:43474"/>
        <dbReference type="ChEBI" id="CHEBI:58359"/>
        <dbReference type="ChEBI" id="CHEBI:78520"/>
        <dbReference type="ChEBI" id="CHEBI:78521"/>
        <dbReference type="ChEBI" id="CHEBI:456216"/>
        <dbReference type="EC" id="6.3.5.7"/>
    </reaction>
</comment>
<comment type="subunit">
    <text evidence="1">Heterotrimer of A, B and C subunits.</text>
</comment>
<comment type="similarity">
    <text evidence="1">Belongs to the amidase family. GatA subfamily.</text>
</comment>
<reference key="1">
    <citation type="journal article" date="2009" name="PLoS ONE">
        <title>Genome degradation in Brucella ovis corresponds with narrowing of its host range and tissue tropism.</title>
        <authorList>
            <person name="Tsolis R.M."/>
            <person name="Seshadri R."/>
            <person name="Santos R.L."/>
            <person name="Sangari F.J."/>
            <person name="Lobo J.M."/>
            <person name="de Jong M.F."/>
            <person name="Ren Q."/>
            <person name="Myers G."/>
            <person name="Brinkac L.M."/>
            <person name="Nelson W.C."/>
            <person name="Deboy R.T."/>
            <person name="Angiuoli S."/>
            <person name="Khouri H."/>
            <person name="Dimitrov G."/>
            <person name="Robinson J.R."/>
            <person name="Mulligan S."/>
            <person name="Walker R.L."/>
            <person name="Elzer P.E."/>
            <person name="Hassan K.A."/>
            <person name="Paulsen I.T."/>
        </authorList>
    </citation>
    <scope>NUCLEOTIDE SEQUENCE [LARGE SCALE GENOMIC DNA]</scope>
    <source>
        <strain>ATCC 25840 / 63/290 / NCTC 10512</strain>
    </source>
</reference>
<protein>
    <recommendedName>
        <fullName evidence="1">Glutamyl-tRNA(Gln) amidotransferase subunit A</fullName>
        <shortName evidence="1">Glu-ADT subunit A</shortName>
        <ecNumber evidence="1">6.3.5.7</ecNumber>
    </recommendedName>
</protein>